<gene>
    <name evidence="1" type="primary">mdtJ</name>
    <name type="ordered locus">SSPA1274</name>
</gene>
<feature type="chain" id="PRO_1000197340" description="Spermidine export protein MdtJ">
    <location>
        <begin position="1"/>
        <end position="120"/>
    </location>
</feature>
<feature type="transmembrane region" description="Helical" evidence="1">
    <location>
        <begin position="1"/>
        <end position="21"/>
    </location>
</feature>
<feature type="transmembrane region" description="Helical" evidence="1">
    <location>
        <begin position="31"/>
        <end position="51"/>
    </location>
</feature>
<feature type="transmembrane region" description="Helical" evidence="1">
    <location>
        <begin position="54"/>
        <end position="74"/>
    </location>
</feature>
<feature type="transmembrane region" description="Helical" evidence="1">
    <location>
        <begin position="81"/>
        <end position="101"/>
    </location>
</feature>
<accession>B5BK90</accession>
<proteinExistence type="inferred from homology"/>
<evidence type="ECO:0000255" key="1">
    <source>
        <dbReference type="HAMAP-Rule" id="MF_01598"/>
    </source>
</evidence>
<dbReference type="EMBL" id="FM200053">
    <property type="protein sequence ID" value="CAR59445.1"/>
    <property type="molecule type" value="Genomic_DNA"/>
</dbReference>
<dbReference type="RefSeq" id="WP_000500279.1">
    <property type="nucleotide sequence ID" value="NC_011147.1"/>
</dbReference>
<dbReference type="SMR" id="B5BK90"/>
<dbReference type="KEGG" id="sek:SSPA1274"/>
<dbReference type="HOGENOM" id="CLU_133067_0_0_6"/>
<dbReference type="Proteomes" id="UP000001869">
    <property type="component" value="Chromosome"/>
</dbReference>
<dbReference type="GO" id="GO:0005886">
    <property type="term" value="C:plasma membrane"/>
    <property type="evidence" value="ECO:0007669"/>
    <property type="project" value="UniProtKB-SubCell"/>
</dbReference>
<dbReference type="GO" id="GO:0015199">
    <property type="term" value="F:amino-acid betaine transmembrane transporter activity"/>
    <property type="evidence" value="ECO:0007669"/>
    <property type="project" value="TreeGrafter"/>
</dbReference>
<dbReference type="GO" id="GO:0015297">
    <property type="term" value="F:antiporter activity"/>
    <property type="evidence" value="ECO:0007669"/>
    <property type="project" value="TreeGrafter"/>
</dbReference>
<dbReference type="GO" id="GO:0015220">
    <property type="term" value="F:choline transmembrane transporter activity"/>
    <property type="evidence" value="ECO:0007669"/>
    <property type="project" value="TreeGrafter"/>
</dbReference>
<dbReference type="GO" id="GO:0015606">
    <property type="term" value="F:spermidine transmembrane transporter activity"/>
    <property type="evidence" value="ECO:0007669"/>
    <property type="project" value="UniProtKB-UniRule"/>
</dbReference>
<dbReference type="GO" id="GO:0031460">
    <property type="term" value="P:glycine betaine transport"/>
    <property type="evidence" value="ECO:0007669"/>
    <property type="project" value="TreeGrafter"/>
</dbReference>
<dbReference type="FunFam" id="1.10.3730.20:FF:000001">
    <property type="entry name" value="Quaternary ammonium compound resistance transporter SugE"/>
    <property type="match status" value="1"/>
</dbReference>
<dbReference type="Gene3D" id="1.10.3730.20">
    <property type="match status" value="1"/>
</dbReference>
<dbReference type="HAMAP" id="MF_01598">
    <property type="entry name" value="MdtJ"/>
    <property type="match status" value="1"/>
</dbReference>
<dbReference type="InterPro" id="IPR000390">
    <property type="entry name" value="Small_drug/metabolite_transptr"/>
</dbReference>
<dbReference type="InterPro" id="IPR045324">
    <property type="entry name" value="Small_multidrug_res"/>
</dbReference>
<dbReference type="InterPro" id="IPR023740">
    <property type="entry name" value="Spermidine_export_MdtJ"/>
</dbReference>
<dbReference type="NCBIfam" id="NF007767">
    <property type="entry name" value="PRK10452.1"/>
    <property type="match status" value="1"/>
</dbReference>
<dbReference type="PANTHER" id="PTHR30561">
    <property type="entry name" value="SMR FAMILY PROTON-DEPENDENT DRUG EFFLUX TRANSPORTER SUGE"/>
    <property type="match status" value="1"/>
</dbReference>
<dbReference type="PANTHER" id="PTHR30561:SF2">
    <property type="entry name" value="SPERMIDINE EXPORT PROTEIN MDTJ"/>
    <property type="match status" value="1"/>
</dbReference>
<dbReference type="Pfam" id="PF00893">
    <property type="entry name" value="Multi_Drug_Res"/>
    <property type="match status" value="1"/>
</dbReference>
<dbReference type="SUPFAM" id="SSF103481">
    <property type="entry name" value="Multidrug resistance efflux transporter EmrE"/>
    <property type="match status" value="1"/>
</dbReference>
<organism>
    <name type="scientific">Salmonella paratyphi A (strain AKU_12601)</name>
    <dbReference type="NCBI Taxonomy" id="554290"/>
    <lineage>
        <taxon>Bacteria</taxon>
        <taxon>Pseudomonadati</taxon>
        <taxon>Pseudomonadota</taxon>
        <taxon>Gammaproteobacteria</taxon>
        <taxon>Enterobacterales</taxon>
        <taxon>Enterobacteriaceae</taxon>
        <taxon>Salmonella</taxon>
    </lineage>
</organism>
<reference key="1">
    <citation type="journal article" date="2009" name="BMC Genomics">
        <title>Pseudogene accumulation in the evolutionary histories of Salmonella enterica serovars Paratyphi A and Typhi.</title>
        <authorList>
            <person name="Holt K.E."/>
            <person name="Thomson N.R."/>
            <person name="Wain J."/>
            <person name="Langridge G.C."/>
            <person name="Hasan R."/>
            <person name="Bhutta Z.A."/>
            <person name="Quail M.A."/>
            <person name="Norbertczak H."/>
            <person name="Walker D."/>
            <person name="Simmonds M."/>
            <person name="White B."/>
            <person name="Bason N."/>
            <person name="Mungall K."/>
            <person name="Dougan G."/>
            <person name="Parkhill J."/>
        </authorList>
    </citation>
    <scope>NUCLEOTIDE SEQUENCE [LARGE SCALE GENOMIC DNA]</scope>
    <source>
        <strain>AKU_12601</strain>
    </source>
</reference>
<protein>
    <recommendedName>
        <fullName evidence="1">Spermidine export protein MdtJ</fullName>
    </recommendedName>
</protein>
<keyword id="KW-0997">Cell inner membrane</keyword>
<keyword id="KW-1003">Cell membrane</keyword>
<keyword id="KW-0472">Membrane</keyword>
<keyword id="KW-0812">Transmembrane</keyword>
<keyword id="KW-1133">Transmembrane helix</keyword>
<keyword id="KW-0813">Transport</keyword>
<sequence>MFYWILLALAIATEITGTLSMKWASVGNGNAGFILMLVMITLSYIFLSFAVKKIALGVAYALWEGIGILFITIFSVLLFDEALSTMKIAGLLTLVAGIVLIKSGTRKPGKPVKGAARATI</sequence>
<comment type="function">
    <text evidence="1">Catalyzes the excretion of spermidine.</text>
</comment>
<comment type="subunit">
    <text evidence="1">Forms a complex with MdtI.</text>
</comment>
<comment type="subcellular location">
    <subcellularLocation>
        <location evidence="1">Cell inner membrane</location>
        <topology evidence="1">Multi-pass membrane protein</topology>
    </subcellularLocation>
</comment>
<comment type="similarity">
    <text evidence="1">Belongs to the drug/metabolite transporter (DMT) superfamily. Small multidrug resistance (SMR) (TC 2.A.7.1) family. MdtJ subfamily.</text>
</comment>
<name>MDTJ_SALPK</name>